<organism>
    <name type="scientific">Pseudomonas putida (strain ATCC 47054 / DSM 6125 / CFBP 8728 / NCIMB 11950 / KT2440)</name>
    <dbReference type="NCBI Taxonomy" id="160488"/>
    <lineage>
        <taxon>Bacteria</taxon>
        <taxon>Pseudomonadati</taxon>
        <taxon>Pseudomonadota</taxon>
        <taxon>Gammaproteobacteria</taxon>
        <taxon>Pseudomonadales</taxon>
        <taxon>Pseudomonadaceae</taxon>
        <taxon>Pseudomonas</taxon>
    </lineage>
</organism>
<name>AK_PSEPK</name>
<reference key="1">
    <citation type="journal article" date="2002" name="Environ. Microbiol.">
        <title>Complete genome sequence and comparative analysis of the metabolically versatile Pseudomonas putida KT2440.</title>
        <authorList>
            <person name="Nelson K.E."/>
            <person name="Weinel C."/>
            <person name="Paulsen I.T."/>
            <person name="Dodson R.J."/>
            <person name="Hilbert H."/>
            <person name="Martins dos Santos V.A.P."/>
            <person name="Fouts D.E."/>
            <person name="Gill S.R."/>
            <person name="Pop M."/>
            <person name="Holmes M."/>
            <person name="Brinkac L.M."/>
            <person name="Beanan M.J."/>
            <person name="DeBoy R.T."/>
            <person name="Daugherty S.C."/>
            <person name="Kolonay J.F."/>
            <person name="Madupu R."/>
            <person name="Nelson W.C."/>
            <person name="White O."/>
            <person name="Peterson J.D."/>
            <person name="Khouri H.M."/>
            <person name="Hance I."/>
            <person name="Chris Lee P."/>
            <person name="Holtzapple E.K."/>
            <person name="Scanlan D."/>
            <person name="Tran K."/>
            <person name="Moazzez A."/>
            <person name="Utterback T.R."/>
            <person name="Rizzo M."/>
            <person name="Lee K."/>
            <person name="Kosack D."/>
            <person name="Moestl D."/>
            <person name="Wedler H."/>
            <person name="Lauber J."/>
            <person name="Stjepandic D."/>
            <person name="Hoheisel J."/>
            <person name="Straetz M."/>
            <person name="Heim S."/>
            <person name="Kiewitz C."/>
            <person name="Eisen J.A."/>
            <person name="Timmis K.N."/>
            <person name="Duesterhoeft A."/>
            <person name="Tuemmler B."/>
            <person name="Fraser C.M."/>
        </authorList>
    </citation>
    <scope>NUCLEOTIDE SEQUENCE [LARGE SCALE GENOMIC DNA]</scope>
    <source>
        <strain>ATCC 47054 / DSM 6125 / CFBP 8728 / NCIMB 11950 / KT2440</strain>
    </source>
</reference>
<reference key="2">
    <citation type="journal article" date="1970" name="Biochim. Biophys. Acta">
        <title>The aspartate kinase of Pseudomonas putida. Regulation of synthesis and activity.</title>
        <authorList>
            <person name="Robert-Gero M."/>
            <person name="Poiret M."/>
            <person name="Cohen G.N."/>
        </authorList>
    </citation>
    <scope>FUNCTION</scope>
    <scope>CATALYTIC ACTIVITY</scope>
    <scope>BIOPHYSICOCHEMICAL PROPERTIES</scope>
    <scope>ACTIVITY REGULATION</scope>
    <scope>INDUCTION</scope>
</reference>
<accession>Q88EI9</accession>
<dbReference type="EC" id="2.7.2.4"/>
<dbReference type="EMBL" id="AE015451">
    <property type="protein sequence ID" value="AAN70048.1"/>
    <property type="molecule type" value="Genomic_DNA"/>
</dbReference>
<dbReference type="RefSeq" id="NP_746584.1">
    <property type="nucleotide sequence ID" value="NC_002947.4"/>
</dbReference>
<dbReference type="RefSeq" id="WP_003254504.1">
    <property type="nucleotide sequence ID" value="NZ_CP169744.1"/>
</dbReference>
<dbReference type="SMR" id="Q88EI9"/>
<dbReference type="STRING" id="160488.PP_4473"/>
<dbReference type="PaxDb" id="160488-PP_4473"/>
<dbReference type="KEGG" id="ppu:PP_4473"/>
<dbReference type="PATRIC" id="fig|160488.4.peg.4759"/>
<dbReference type="eggNOG" id="COG0527">
    <property type="taxonomic scope" value="Bacteria"/>
</dbReference>
<dbReference type="HOGENOM" id="CLU_009116_3_2_6"/>
<dbReference type="OrthoDB" id="9799110at2"/>
<dbReference type="PhylomeDB" id="Q88EI9"/>
<dbReference type="BioCyc" id="PPUT160488:G1G01-4774-MONOMER"/>
<dbReference type="UniPathway" id="UPA00034">
    <property type="reaction ID" value="UER00015"/>
</dbReference>
<dbReference type="UniPathway" id="UPA00050">
    <property type="reaction ID" value="UER00461"/>
</dbReference>
<dbReference type="UniPathway" id="UPA00051">
    <property type="reaction ID" value="UER00462"/>
</dbReference>
<dbReference type="Proteomes" id="UP000000556">
    <property type="component" value="Chromosome"/>
</dbReference>
<dbReference type="GO" id="GO:0005829">
    <property type="term" value="C:cytosol"/>
    <property type="evidence" value="ECO:0007669"/>
    <property type="project" value="TreeGrafter"/>
</dbReference>
<dbReference type="GO" id="GO:0004072">
    <property type="term" value="F:aspartate kinase activity"/>
    <property type="evidence" value="ECO:0000314"/>
    <property type="project" value="UniProtKB"/>
</dbReference>
<dbReference type="GO" id="GO:0005524">
    <property type="term" value="F:ATP binding"/>
    <property type="evidence" value="ECO:0007669"/>
    <property type="project" value="UniProtKB-KW"/>
</dbReference>
<dbReference type="GO" id="GO:0009090">
    <property type="term" value="P:homoserine biosynthetic process"/>
    <property type="evidence" value="ECO:0007669"/>
    <property type="project" value="TreeGrafter"/>
</dbReference>
<dbReference type="GO" id="GO:0009089">
    <property type="term" value="P:lysine biosynthetic process via diaminopimelate"/>
    <property type="evidence" value="ECO:0007669"/>
    <property type="project" value="UniProtKB-UniPathway"/>
</dbReference>
<dbReference type="GO" id="GO:0009086">
    <property type="term" value="P:methionine biosynthetic process"/>
    <property type="evidence" value="ECO:0007669"/>
    <property type="project" value="UniProtKB-KW"/>
</dbReference>
<dbReference type="GO" id="GO:0009088">
    <property type="term" value="P:threonine biosynthetic process"/>
    <property type="evidence" value="ECO:0007669"/>
    <property type="project" value="UniProtKB-UniPathway"/>
</dbReference>
<dbReference type="CDD" id="cd04261">
    <property type="entry name" value="AAK_AKii-LysC-BS"/>
    <property type="match status" value="1"/>
</dbReference>
<dbReference type="CDD" id="cd04923">
    <property type="entry name" value="ACT_AK-LysC-DapG-like_2"/>
    <property type="match status" value="1"/>
</dbReference>
<dbReference type="CDD" id="cd04913">
    <property type="entry name" value="ACT_AKii-LysC-BS-like_1"/>
    <property type="match status" value="1"/>
</dbReference>
<dbReference type="FunFam" id="3.30.2130.10:FF:000002">
    <property type="entry name" value="Aspartokinase"/>
    <property type="match status" value="1"/>
</dbReference>
<dbReference type="FunFam" id="3.40.1160.10:FF:000002">
    <property type="entry name" value="Aspartokinase"/>
    <property type="match status" value="1"/>
</dbReference>
<dbReference type="Gene3D" id="3.40.1160.10">
    <property type="entry name" value="Acetylglutamate kinase-like"/>
    <property type="match status" value="1"/>
</dbReference>
<dbReference type="Gene3D" id="3.30.2130.10">
    <property type="entry name" value="VC0802-like"/>
    <property type="match status" value="1"/>
</dbReference>
<dbReference type="InterPro" id="IPR036393">
    <property type="entry name" value="AceGlu_kinase-like_sf"/>
</dbReference>
<dbReference type="InterPro" id="IPR045865">
    <property type="entry name" value="ACT-like_dom_sf"/>
</dbReference>
<dbReference type="InterPro" id="IPR054352">
    <property type="entry name" value="ACT_Aspartokinase"/>
</dbReference>
<dbReference type="InterPro" id="IPR002912">
    <property type="entry name" value="ACT_dom"/>
</dbReference>
<dbReference type="InterPro" id="IPR041740">
    <property type="entry name" value="AKii-LysC-BS"/>
</dbReference>
<dbReference type="InterPro" id="IPR001048">
    <property type="entry name" value="Asp/Glu/Uridylate_kinase"/>
</dbReference>
<dbReference type="InterPro" id="IPR005260">
    <property type="entry name" value="Asp_kin_monofn"/>
</dbReference>
<dbReference type="InterPro" id="IPR001341">
    <property type="entry name" value="Asp_kinase"/>
</dbReference>
<dbReference type="InterPro" id="IPR018042">
    <property type="entry name" value="Aspartate_kinase_CS"/>
</dbReference>
<dbReference type="NCBIfam" id="TIGR00656">
    <property type="entry name" value="asp_kin_monofn"/>
    <property type="match status" value="1"/>
</dbReference>
<dbReference type="NCBIfam" id="TIGR00657">
    <property type="entry name" value="asp_kinases"/>
    <property type="match status" value="1"/>
</dbReference>
<dbReference type="NCBIfam" id="NF005154">
    <property type="entry name" value="PRK06635.1-2"/>
    <property type="match status" value="1"/>
</dbReference>
<dbReference type="NCBIfam" id="NF005155">
    <property type="entry name" value="PRK06635.1-4"/>
    <property type="match status" value="1"/>
</dbReference>
<dbReference type="PANTHER" id="PTHR21499">
    <property type="entry name" value="ASPARTATE KINASE"/>
    <property type="match status" value="1"/>
</dbReference>
<dbReference type="PANTHER" id="PTHR21499:SF3">
    <property type="entry name" value="ASPARTOKINASE"/>
    <property type="match status" value="1"/>
</dbReference>
<dbReference type="Pfam" id="PF00696">
    <property type="entry name" value="AA_kinase"/>
    <property type="match status" value="1"/>
</dbReference>
<dbReference type="Pfam" id="PF01842">
    <property type="entry name" value="ACT"/>
    <property type="match status" value="1"/>
</dbReference>
<dbReference type="Pfam" id="PF22468">
    <property type="entry name" value="ACT_9"/>
    <property type="match status" value="1"/>
</dbReference>
<dbReference type="PIRSF" id="PIRSF000726">
    <property type="entry name" value="Asp_kin"/>
    <property type="match status" value="1"/>
</dbReference>
<dbReference type="SUPFAM" id="SSF55021">
    <property type="entry name" value="ACT-like"/>
    <property type="match status" value="2"/>
</dbReference>
<dbReference type="SUPFAM" id="SSF53633">
    <property type="entry name" value="Carbamate kinase-like"/>
    <property type="match status" value="1"/>
</dbReference>
<dbReference type="PROSITE" id="PS51671">
    <property type="entry name" value="ACT"/>
    <property type="match status" value="1"/>
</dbReference>
<dbReference type="PROSITE" id="PS00324">
    <property type="entry name" value="ASPARTOKINASE"/>
    <property type="match status" value="1"/>
</dbReference>
<protein>
    <recommendedName>
        <fullName>Aspartate kinase</fullName>
        <ecNumber>2.7.2.4</ecNumber>
    </recommendedName>
    <alternativeName>
        <fullName>Aspartokinase</fullName>
    </alternativeName>
</protein>
<gene>
    <name type="ordered locus">PP_4473</name>
</gene>
<sequence length="411" mass="44605">MALIVQKFGGTSVGSIERIEQVAEKVKKHREAGDDLVVVLSAMSGETNRLIDLAKQITDQPVPRELDVIVSTGEQVTIALLTMALIKRGVPAVSYTGNQVRILTDSSHNKARILQIDDQKIRADLKEGRVVVVAGFQGVDEHGSITTLGRGGSDTTGVALAAALKADECQIYTDVDGVYTTDPRVVPQARRLEKITFEEMLEMASLGSKVLQIRSVEFAGKYNVPLRVLHSFKEGPGTLITIDEEESMEQPIISGIAFNRDEAKLTIRGVPDTPGVAFKILGPISASNIEVDMIVQNVAHDNTTDFTFTVHRNEYEKAQSVLENTAREIGAREVIGDTKIAKVSIVGVGMRSHAGVASCMFEALAKESINIQMISTSEIKVSVVLEEKYLELAVRALHTAFDLDAPARQGE</sequence>
<feature type="chain" id="PRO_0000428880" description="Aspartate kinase">
    <location>
        <begin position="1"/>
        <end position="411"/>
    </location>
</feature>
<feature type="domain" description="ACT" evidence="2">
    <location>
        <begin position="265"/>
        <end position="348"/>
    </location>
</feature>
<proteinExistence type="evidence at protein level"/>
<keyword id="KW-0021">Allosteric enzyme</keyword>
<keyword id="KW-0028">Amino-acid biosynthesis</keyword>
<keyword id="KW-0067">ATP-binding</keyword>
<keyword id="KW-0963">Cytoplasm</keyword>
<keyword id="KW-0418">Kinase</keyword>
<keyword id="KW-0457">Lysine biosynthesis</keyword>
<keyword id="KW-0486">Methionine biosynthesis</keyword>
<keyword id="KW-0547">Nucleotide-binding</keyword>
<keyword id="KW-1185">Reference proteome</keyword>
<keyword id="KW-0791">Threonine biosynthesis</keyword>
<keyword id="KW-0808">Transferase</keyword>
<evidence type="ECO:0000250" key="1"/>
<evidence type="ECO:0000255" key="2">
    <source>
        <dbReference type="PROSITE-ProRule" id="PRU01007"/>
    </source>
</evidence>
<evidence type="ECO:0000269" key="3">
    <source>
    </source>
</evidence>
<evidence type="ECO:0000305" key="4"/>
<comment type="function">
    <text evidence="3">Involved in the biosynthesis of L-aspartate-beta-semialdehyde which is a central intermediate in the biosynthesis of different amino acids (L-lysine, L-methionine, L-threonine). Catalyzes the phosphorylation of the beta-carboxyl group of L-aspartate to yield 4-phospho-L-aspartate.</text>
</comment>
<comment type="catalytic activity">
    <reaction evidence="3">
        <text>L-aspartate + ATP = 4-phospho-L-aspartate + ADP</text>
        <dbReference type="Rhea" id="RHEA:23776"/>
        <dbReference type="ChEBI" id="CHEBI:29991"/>
        <dbReference type="ChEBI" id="CHEBI:30616"/>
        <dbReference type="ChEBI" id="CHEBI:57535"/>
        <dbReference type="ChEBI" id="CHEBI:456216"/>
        <dbReference type="EC" id="2.7.2.4"/>
    </reaction>
</comment>
<comment type="activity regulation">
    <text evidence="3">Allosterically feedback inhibited by L-lysine and L-threonine individually and also subject to a concerted feedback inhibition by these amino acids.</text>
</comment>
<comment type="biophysicochemical properties">
    <kinetics>
        <KM evidence="3">4.35 uM for ATP</KM>
        <KM evidence="3">4.8 uM for L-aspartate</KM>
    </kinetics>
    <phDependence>
        <text evidence="3">Optimum pH is between 7.9 and 8.4.</text>
    </phDependence>
</comment>
<comment type="pathway">
    <text>Amino-acid biosynthesis; L-lysine biosynthesis via DAP pathway; (S)-tetrahydrodipicolinate from L-aspartate: step 1/4.</text>
</comment>
<comment type="pathway">
    <text>Amino-acid biosynthesis; L-methionine biosynthesis via de novo pathway; L-homoserine from L-aspartate: step 1/3.</text>
</comment>
<comment type="pathway">
    <text>Amino-acid biosynthesis; L-threonine biosynthesis; L-threonine from L-aspartate: step 1/5.</text>
</comment>
<comment type="subcellular location">
    <subcellularLocation>
        <location evidence="1">Cytoplasm</location>
    </subcellularLocation>
</comment>
<comment type="induction">
    <text evidence="3">Repressed by L-methionine.</text>
</comment>
<comment type="similarity">
    <text evidence="4">Belongs to the aspartokinase family.</text>
</comment>